<comment type="function">
    <text evidence="1">This is one of the proteins that bind and probably mediate the attachment of the 5S RNA into the large ribosomal subunit, where it forms part of the central protuberance.</text>
</comment>
<comment type="subunit">
    <text evidence="1">Part of the 50S ribosomal subunit; part of the 5S rRNA/L5/L18/L25 subcomplex. Contacts the 5S and 23S rRNAs.</text>
</comment>
<comment type="similarity">
    <text evidence="1">Belongs to the universal ribosomal protein uL18 family.</text>
</comment>
<reference key="1">
    <citation type="journal article" date="2004" name="Nat. Biotechnol.">
        <title>The genome sequence of the capnophilic rumen bacterium Mannheimia succiniciproducens.</title>
        <authorList>
            <person name="Hong S.H."/>
            <person name="Kim J.S."/>
            <person name="Lee S.Y."/>
            <person name="In Y.H."/>
            <person name="Choi S.S."/>
            <person name="Rih J.-K."/>
            <person name="Kim C.H."/>
            <person name="Jeong H."/>
            <person name="Hur C.G."/>
            <person name="Kim J.J."/>
        </authorList>
    </citation>
    <scope>NUCLEOTIDE SEQUENCE [LARGE SCALE GENOMIC DNA]</scope>
    <source>
        <strain>KCTC 0769BP / MBEL55E</strain>
    </source>
</reference>
<sequence>MDKKSARIRRAARARHMMRENGVTRLVIHRTPRHIYAQVIAPNGSEVLAAASTVEKAISEQVKYTGNKDAAAVVGKLVAERALAKGIKDVAFDRSGFKYHGRVQSLADAAREAGLQF</sequence>
<dbReference type="EMBL" id="AE016827">
    <property type="protein sequence ID" value="AAU38639.1"/>
    <property type="molecule type" value="Genomic_DNA"/>
</dbReference>
<dbReference type="RefSeq" id="WP_011201190.1">
    <property type="nucleotide sequence ID" value="NC_006300.1"/>
</dbReference>
<dbReference type="SMR" id="Q65QX1"/>
<dbReference type="STRING" id="221988.MS2032"/>
<dbReference type="KEGG" id="msu:MS2032"/>
<dbReference type="eggNOG" id="COG0256">
    <property type="taxonomic scope" value="Bacteria"/>
</dbReference>
<dbReference type="HOGENOM" id="CLU_098841_0_1_6"/>
<dbReference type="OrthoDB" id="9810939at2"/>
<dbReference type="Proteomes" id="UP000000607">
    <property type="component" value="Chromosome"/>
</dbReference>
<dbReference type="GO" id="GO:0022625">
    <property type="term" value="C:cytosolic large ribosomal subunit"/>
    <property type="evidence" value="ECO:0007669"/>
    <property type="project" value="TreeGrafter"/>
</dbReference>
<dbReference type="GO" id="GO:0008097">
    <property type="term" value="F:5S rRNA binding"/>
    <property type="evidence" value="ECO:0007669"/>
    <property type="project" value="TreeGrafter"/>
</dbReference>
<dbReference type="GO" id="GO:0003735">
    <property type="term" value="F:structural constituent of ribosome"/>
    <property type="evidence" value="ECO:0007669"/>
    <property type="project" value="InterPro"/>
</dbReference>
<dbReference type="GO" id="GO:0006412">
    <property type="term" value="P:translation"/>
    <property type="evidence" value="ECO:0007669"/>
    <property type="project" value="UniProtKB-UniRule"/>
</dbReference>
<dbReference type="CDD" id="cd00432">
    <property type="entry name" value="Ribosomal_L18_L5e"/>
    <property type="match status" value="1"/>
</dbReference>
<dbReference type="FunFam" id="3.30.420.100:FF:000001">
    <property type="entry name" value="50S ribosomal protein L18"/>
    <property type="match status" value="1"/>
</dbReference>
<dbReference type="Gene3D" id="3.30.420.100">
    <property type="match status" value="1"/>
</dbReference>
<dbReference type="HAMAP" id="MF_01337_B">
    <property type="entry name" value="Ribosomal_uL18_B"/>
    <property type="match status" value="1"/>
</dbReference>
<dbReference type="InterPro" id="IPR004389">
    <property type="entry name" value="Ribosomal_uL18_bac-type"/>
</dbReference>
<dbReference type="InterPro" id="IPR005484">
    <property type="entry name" value="Ribosomal_uL18_bac/euk"/>
</dbReference>
<dbReference type="NCBIfam" id="TIGR00060">
    <property type="entry name" value="L18_bact"/>
    <property type="match status" value="1"/>
</dbReference>
<dbReference type="PANTHER" id="PTHR12899">
    <property type="entry name" value="39S RIBOSOMAL PROTEIN L18, MITOCHONDRIAL"/>
    <property type="match status" value="1"/>
</dbReference>
<dbReference type="PANTHER" id="PTHR12899:SF3">
    <property type="entry name" value="LARGE RIBOSOMAL SUBUNIT PROTEIN UL18M"/>
    <property type="match status" value="1"/>
</dbReference>
<dbReference type="Pfam" id="PF00861">
    <property type="entry name" value="Ribosomal_L18p"/>
    <property type="match status" value="1"/>
</dbReference>
<dbReference type="SUPFAM" id="SSF53137">
    <property type="entry name" value="Translational machinery components"/>
    <property type="match status" value="1"/>
</dbReference>
<accession>Q65QX1</accession>
<gene>
    <name evidence="1" type="primary">rplR</name>
    <name type="ordered locus">MS2032</name>
</gene>
<proteinExistence type="inferred from homology"/>
<protein>
    <recommendedName>
        <fullName evidence="1">Large ribosomal subunit protein uL18</fullName>
    </recommendedName>
    <alternativeName>
        <fullName evidence="2">50S ribosomal protein L18</fullName>
    </alternativeName>
</protein>
<evidence type="ECO:0000255" key="1">
    <source>
        <dbReference type="HAMAP-Rule" id="MF_01337"/>
    </source>
</evidence>
<evidence type="ECO:0000305" key="2"/>
<name>RL18_MANSM</name>
<organism>
    <name type="scientific">Mannheimia succiniciproducens (strain KCTC 0769BP / MBEL55E)</name>
    <dbReference type="NCBI Taxonomy" id="221988"/>
    <lineage>
        <taxon>Bacteria</taxon>
        <taxon>Pseudomonadati</taxon>
        <taxon>Pseudomonadota</taxon>
        <taxon>Gammaproteobacteria</taxon>
        <taxon>Pasteurellales</taxon>
        <taxon>Pasteurellaceae</taxon>
        <taxon>Basfia</taxon>
    </lineage>
</organism>
<feature type="chain" id="PRO_0000131290" description="Large ribosomal subunit protein uL18">
    <location>
        <begin position="1"/>
        <end position="117"/>
    </location>
</feature>
<keyword id="KW-0687">Ribonucleoprotein</keyword>
<keyword id="KW-0689">Ribosomal protein</keyword>
<keyword id="KW-0694">RNA-binding</keyword>
<keyword id="KW-0699">rRNA-binding</keyword>